<proteinExistence type="inferred from homology"/>
<dbReference type="EC" id="2.4.2.9" evidence="1"/>
<dbReference type="EMBL" id="AE014133">
    <property type="protein sequence ID" value="AAN59312.1"/>
    <property type="molecule type" value="Genomic_DNA"/>
</dbReference>
<dbReference type="RefSeq" id="NP_722006.1">
    <property type="nucleotide sequence ID" value="NC_004350.2"/>
</dbReference>
<dbReference type="RefSeq" id="WP_002262598.1">
    <property type="nucleotide sequence ID" value="NC_004350.2"/>
</dbReference>
<dbReference type="SMR" id="Q8DST6"/>
<dbReference type="STRING" id="210007.SMU_1673"/>
<dbReference type="GeneID" id="93858902"/>
<dbReference type="KEGG" id="smu:SMU_1673"/>
<dbReference type="PATRIC" id="fig|210007.7.peg.1495"/>
<dbReference type="eggNOG" id="COG0035">
    <property type="taxonomic scope" value="Bacteria"/>
</dbReference>
<dbReference type="HOGENOM" id="CLU_067096_2_2_9"/>
<dbReference type="OrthoDB" id="9781675at2"/>
<dbReference type="PhylomeDB" id="Q8DST6"/>
<dbReference type="UniPathway" id="UPA00574">
    <property type="reaction ID" value="UER00636"/>
</dbReference>
<dbReference type="Proteomes" id="UP000002512">
    <property type="component" value="Chromosome"/>
</dbReference>
<dbReference type="GO" id="GO:0005525">
    <property type="term" value="F:GTP binding"/>
    <property type="evidence" value="ECO:0007669"/>
    <property type="project" value="UniProtKB-KW"/>
</dbReference>
<dbReference type="GO" id="GO:0000287">
    <property type="term" value="F:magnesium ion binding"/>
    <property type="evidence" value="ECO:0007669"/>
    <property type="project" value="UniProtKB-UniRule"/>
</dbReference>
<dbReference type="GO" id="GO:0004845">
    <property type="term" value="F:uracil phosphoribosyltransferase activity"/>
    <property type="evidence" value="ECO:0007669"/>
    <property type="project" value="UniProtKB-UniRule"/>
</dbReference>
<dbReference type="GO" id="GO:0044206">
    <property type="term" value="P:UMP salvage"/>
    <property type="evidence" value="ECO:0007669"/>
    <property type="project" value="UniProtKB-UniRule"/>
</dbReference>
<dbReference type="GO" id="GO:0006223">
    <property type="term" value="P:uracil salvage"/>
    <property type="evidence" value="ECO:0007669"/>
    <property type="project" value="InterPro"/>
</dbReference>
<dbReference type="CDD" id="cd06223">
    <property type="entry name" value="PRTases_typeI"/>
    <property type="match status" value="1"/>
</dbReference>
<dbReference type="FunFam" id="3.40.50.2020:FF:000003">
    <property type="entry name" value="Uracil phosphoribosyltransferase"/>
    <property type="match status" value="1"/>
</dbReference>
<dbReference type="Gene3D" id="3.40.50.2020">
    <property type="match status" value="1"/>
</dbReference>
<dbReference type="HAMAP" id="MF_01218_B">
    <property type="entry name" value="Upp_B"/>
    <property type="match status" value="1"/>
</dbReference>
<dbReference type="InterPro" id="IPR000836">
    <property type="entry name" value="PRibTrfase_dom"/>
</dbReference>
<dbReference type="InterPro" id="IPR029057">
    <property type="entry name" value="PRTase-like"/>
</dbReference>
<dbReference type="InterPro" id="IPR034332">
    <property type="entry name" value="Upp_B"/>
</dbReference>
<dbReference type="InterPro" id="IPR050054">
    <property type="entry name" value="UPRTase/APRTase"/>
</dbReference>
<dbReference type="InterPro" id="IPR005765">
    <property type="entry name" value="Ura_phspho_trans"/>
</dbReference>
<dbReference type="NCBIfam" id="NF001097">
    <property type="entry name" value="PRK00129.1"/>
    <property type="match status" value="1"/>
</dbReference>
<dbReference type="NCBIfam" id="TIGR01091">
    <property type="entry name" value="upp"/>
    <property type="match status" value="1"/>
</dbReference>
<dbReference type="PANTHER" id="PTHR32315">
    <property type="entry name" value="ADENINE PHOSPHORIBOSYLTRANSFERASE"/>
    <property type="match status" value="1"/>
</dbReference>
<dbReference type="PANTHER" id="PTHR32315:SF4">
    <property type="entry name" value="URACIL PHOSPHORIBOSYLTRANSFERASE, CHLOROPLASTIC"/>
    <property type="match status" value="1"/>
</dbReference>
<dbReference type="Pfam" id="PF14681">
    <property type="entry name" value="UPRTase"/>
    <property type="match status" value="1"/>
</dbReference>
<dbReference type="SUPFAM" id="SSF53271">
    <property type="entry name" value="PRTase-like"/>
    <property type="match status" value="1"/>
</dbReference>
<sequence>MGKFQIISHPLIQHKLSILRRKDTSTKHFRELVNEIAMLMGYEVSRELPLEEVEIETPITKTVQKQLTGKKLAIVPILRAGIGMVDGLLSLVPAAKVGHIGMYRDEETLEPVEYLVKLPEDIDQRQIFVVDPMLATGGSAVLAIDSLKKRGAANIKFVCLVSAPEGLKKLQEAHPDIDIYTAALDEKLNEKGYIVPGLGDAGDRLFGTK</sequence>
<comment type="function">
    <text evidence="1">Catalyzes the conversion of uracil and 5-phospho-alpha-D-ribose 1-diphosphate (PRPP) to UMP and diphosphate.</text>
</comment>
<comment type="catalytic activity">
    <reaction evidence="1">
        <text>UMP + diphosphate = 5-phospho-alpha-D-ribose 1-diphosphate + uracil</text>
        <dbReference type="Rhea" id="RHEA:13017"/>
        <dbReference type="ChEBI" id="CHEBI:17568"/>
        <dbReference type="ChEBI" id="CHEBI:33019"/>
        <dbReference type="ChEBI" id="CHEBI:57865"/>
        <dbReference type="ChEBI" id="CHEBI:58017"/>
        <dbReference type="EC" id="2.4.2.9"/>
    </reaction>
</comment>
<comment type="cofactor">
    <cofactor evidence="1">
        <name>Mg(2+)</name>
        <dbReference type="ChEBI" id="CHEBI:18420"/>
    </cofactor>
    <text evidence="1">Binds 1 Mg(2+) ion per subunit. The magnesium is bound as Mg-PRPP.</text>
</comment>
<comment type="activity regulation">
    <text evidence="1">Allosterically activated by GTP.</text>
</comment>
<comment type="pathway">
    <text evidence="1">Pyrimidine metabolism; UMP biosynthesis via salvage pathway; UMP from uracil: step 1/1.</text>
</comment>
<comment type="similarity">
    <text evidence="1">Belongs to the UPRTase family.</text>
</comment>
<feature type="chain" id="PRO_0000120893" description="Uracil phosphoribosyltransferase">
    <location>
        <begin position="1"/>
        <end position="209"/>
    </location>
</feature>
<feature type="binding site" evidence="1">
    <location>
        <position position="79"/>
    </location>
    <ligand>
        <name>5-phospho-alpha-D-ribose 1-diphosphate</name>
        <dbReference type="ChEBI" id="CHEBI:58017"/>
    </ligand>
</feature>
<feature type="binding site" evidence="1">
    <location>
        <position position="104"/>
    </location>
    <ligand>
        <name>5-phospho-alpha-D-ribose 1-diphosphate</name>
        <dbReference type="ChEBI" id="CHEBI:58017"/>
    </ligand>
</feature>
<feature type="binding site" evidence="1">
    <location>
        <begin position="131"/>
        <end position="139"/>
    </location>
    <ligand>
        <name>5-phospho-alpha-D-ribose 1-diphosphate</name>
        <dbReference type="ChEBI" id="CHEBI:58017"/>
    </ligand>
</feature>
<feature type="binding site" evidence="1">
    <location>
        <position position="194"/>
    </location>
    <ligand>
        <name>uracil</name>
        <dbReference type="ChEBI" id="CHEBI:17568"/>
    </ligand>
</feature>
<feature type="binding site" evidence="1">
    <location>
        <begin position="199"/>
        <end position="201"/>
    </location>
    <ligand>
        <name>uracil</name>
        <dbReference type="ChEBI" id="CHEBI:17568"/>
    </ligand>
</feature>
<feature type="binding site" evidence="1">
    <location>
        <position position="200"/>
    </location>
    <ligand>
        <name>5-phospho-alpha-D-ribose 1-diphosphate</name>
        <dbReference type="ChEBI" id="CHEBI:58017"/>
    </ligand>
</feature>
<organism>
    <name type="scientific">Streptococcus mutans serotype c (strain ATCC 700610 / UA159)</name>
    <dbReference type="NCBI Taxonomy" id="210007"/>
    <lineage>
        <taxon>Bacteria</taxon>
        <taxon>Bacillati</taxon>
        <taxon>Bacillota</taxon>
        <taxon>Bacilli</taxon>
        <taxon>Lactobacillales</taxon>
        <taxon>Streptococcaceae</taxon>
        <taxon>Streptococcus</taxon>
    </lineage>
</organism>
<name>UPP_STRMU</name>
<accession>Q8DST6</accession>
<protein>
    <recommendedName>
        <fullName evidence="1">Uracil phosphoribosyltransferase</fullName>
        <ecNumber evidence="1">2.4.2.9</ecNumber>
    </recommendedName>
    <alternativeName>
        <fullName evidence="1">UMP pyrophosphorylase</fullName>
    </alternativeName>
    <alternativeName>
        <fullName evidence="1">UPRTase</fullName>
    </alternativeName>
</protein>
<gene>
    <name evidence="1" type="primary">upp</name>
    <name type="ordered locus">SMU_1673</name>
</gene>
<keyword id="KW-0021">Allosteric enzyme</keyword>
<keyword id="KW-0328">Glycosyltransferase</keyword>
<keyword id="KW-0342">GTP-binding</keyword>
<keyword id="KW-0460">Magnesium</keyword>
<keyword id="KW-0547">Nucleotide-binding</keyword>
<keyword id="KW-1185">Reference proteome</keyword>
<keyword id="KW-0808">Transferase</keyword>
<reference key="1">
    <citation type="journal article" date="2002" name="Proc. Natl. Acad. Sci. U.S.A.">
        <title>Genome sequence of Streptococcus mutans UA159, a cariogenic dental pathogen.</title>
        <authorList>
            <person name="Ajdic D.J."/>
            <person name="McShan W.M."/>
            <person name="McLaughlin R.E."/>
            <person name="Savic G."/>
            <person name="Chang J."/>
            <person name="Carson M.B."/>
            <person name="Primeaux C."/>
            <person name="Tian R."/>
            <person name="Kenton S."/>
            <person name="Jia H.G."/>
            <person name="Lin S.P."/>
            <person name="Qian Y."/>
            <person name="Li S."/>
            <person name="Zhu H."/>
            <person name="Najar F.Z."/>
            <person name="Lai H."/>
            <person name="White J."/>
            <person name="Roe B.A."/>
            <person name="Ferretti J.J."/>
        </authorList>
    </citation>
    <scope>NUCLEOTIDE SEQUENCE [LARGE SCALE GENOMIC DNA]</scope>
    <source>
        <strain>ATCC 700610 / UA159</strain>
    </source>
</reference>
<evidence type="ECO:0000255" key="1">
    <source>
        <dbReference type="HAMAP-Rule" id="MF_01218"/>
    </source>
</evidence>